<keyword id="KW-0002">3D-structure</keyword>
<keyword id="KW-0963">Cytoplasm</keyword>
<keyword id="KW-0408">Iron</keyword>
<keyword id="KW-0409">Iron storage</keyword>
<keyword id="KW-0479">Metal-binding</keyword>
<keyword id="KW-0560">Oxidoreductase</keyword>
<keyword id="KW-1185">Reference proteome</keyword>
<dbReference type="EC" id="1.16.-.-"/>
<dbReference type="EMBL" id="AE007869">
    <property type="protein sequence ID" value="AAK88212.1"/>
    <property type="molecule type" value="Genomic_DNA"/>
</dbReference>
<dbReference type="PIR" id="AC2881">
    <property type="entry name" value="AC2881"/>
</dbReference>
<dbReference type="PIR" id="C97657">
    <property type="entry name" value="C97657"/>
</dbReference>
<dbReference type="RefSeq" id="NP_355427.1">
    <property type="nucleotide sequence ID" value="NC_003062.2"/>
</dbReference>
<dbReference type="RefSeq" id="WP_006312098.1">
    <property type="nucleotide sequence ID" value="NC_003062.2"/>
</dbReference>
<dbReference type="PDB" id="1O9R">
    <property type="method" value="X-ray"/>
    <property type="resolution" value="1.45 A"/>
    <property type="chains" value="A/B/C/D/E/F=1-162"/>
</dbReference>
<dbReference type="PDBsum" id="1O9R"/>
<dbReference type="SMR" id="Q8UCK6"/>
<dbReference type="STRING" id="176299.Atu2477"/>
<dbReference type="EnsemblBacteria" id="AAK88212">
    <property type="protein sequence ID" value="AAK88212"/>
    <property type="gene ID" value="Atu2477"/>
</dbReference>
<dbReference type="GeneID" id="1134515"/>
<dbReference type="KEGG" id="atu:Atu2477"/>
<dbReference type="PATRIC" id="fig|176299.10.peg.2490"/>
<dbReference type="eggNOG" id="COG0783">
    <property type="taxonomic scope" value="Bacteria"/>
</dbReference>
<dbReference type="HOGENOM" id="CLU_098183_1_2_5"/>
<dbReference type="OrthoDB" id="9797687at2"/>
<dbReference type="PhylomeDB" id="Q8UCK6"/>
<dbReference type="BioCyc" id="AGRO:ATU2477-MONOMER"/>
<dbReference type="EvolutionaryTrace" id="Q8UCK6"/>
<dbReference type="PHI-base" id="PHI:10828"/>
<dbReference type="Proteomes" id="UP000000813">
    <property type="component" value="Chromosome circular"/>
</dbReference>
<dbReference type="GO" id="GO:0005737">
    <property type="term" value="C:cytoplasm"/>
    <property type="evidence" value="ECO:0007669"/>
    <property type="project" value="UniProtKB-SubCell"/>
</dbReference>
<dbReference type="GO" id="GO:0008199">
    <property type="term" value="F:ferric iron binding"/>
    <property type="evidence" value="ECO:0007669"/>
    <property type="project" value="InterPro"/>
</dbReference>
<dbReference type="GO" id="GO:0016722">
    <property type="term" value="F:oxidoreductase activity, acting on metal ions"/>
    <property type="evidence" value="ECO:0007669"/>
    <property type="project" value="InterPro"/>
</dbReference>
<dbReference type="GO" id="GO:0006879">
    <property type="term" value="P:intracellular iron ion homeostasis"/>
    <property type="evidence" value="ECO:0007669"/>
    <property type="project" value="UniProtKB-KW"/>
</dbReference>
<dbReference type="CDD" id="cd01043">
    <property type="entry name" value="DPS"/>
    <property type="match status" value="1"/>
</dbReference>
<dbReference type="Gene3D" id="1.20.1260.10">
    <property type="match status" value="1"/>
</dbReference>
<dbReference type="InterPro" id="IPR002177">
    <property type="entry name" value="DPS_DNA-bd"/>
</dbReference>
<dbReference type="InterPro" id="IPR023188">
    <property type="entry name" value="DPS_DNA-bd_CS"/>
</dbReference>
<dbReference type="InterPro" id="IPR012347">
    <property type="entry name" value="Ferritin-like"/>
</dbReference>
<dbReference type="InterPro" id="IPR009078">
    <property type="entry name" value="Ferritin-like_SF"/>
</dbReference>
<dbReference type="InterPro" id="IPR008331">
    <property type="entry name" value="Ferritin_DPS_dom"/>
</dbReference>
<dbReference type="NCBIfam" id="NF006975">
    <property type="entry name" value="PRK09448.1"/>
    <property type="match status" value="1"/>
</dbReference>
<dbReference type="PANTHER" id="PTHR42932:SF3">
    <property type="entry name" value="DNA PROTECTION DURING STARVATION PROTEIN"/>
    <property type="match status" value="1"/>
</dbReference>
<dbReference type="PANTHER" id="PTHR42932">
    <property type="entry name" value="GENERAL STRESS PROTEIN 20U"/>
    <property type="match status" value="1"/>
</dbReference>
<dbReference type="Pfam" id="PF00210">
    <property type="entry name" value="Ferritin"/>
    <property type="match status" value="1"/>
</dbReference>
<dbReference type="PIRSF" id="PIRSF005900">
    <property type="entry name" value="Dps"/>
    <property type="match status" value="1"/>
</dbReference>
<dbReference type="PRINTS" id="PR01346">
    <property type="entry name" value="HELNAPAPROT"/>
</dbReference>
<dbReference type="SUPFAM" id="SSF47240">
    <property type="entry name" value="Ferritin-like"/>
    <property type="match status" value="1"/>
</dbReference>
<dbReference type="PROSITE" id="PS00818">
    <property type="entry name" value="DPS_1"/>
    <property type="match status" value="1"/>
</dbReference>
<protein>
    <recommendedName>
        <fullName>DNA protection during starvation protein</fullName>
        <ecNumber>1.16.-.-</ecNumber>
    </recommendedName>
</protein>
<proteinExistence type="evidence at protein level"/>
<evidence type="ECO:0000250" key="1"/>
<evidence type="ECO:0000269" key="2">
    <source>
    </source>
</evidence>
<evidence type="ECO:0000305" key="3"/>
<evidence type="ECO:0007829" key="4">
    <source>
        <dbReference type="PDB" id="1O9R"/>
    </source>
</evidence>
<name>DPS_AGRFC</name>
<organism>
    <name type="scientific">Agrobacterium fabrum (strain C58 / ATCC 33970)</name>
    <name type="common">Agrobacterium tumefaciens (strain C58)</name>
    <dbReference type="NCBI Taxonomy" id="176299"/>
    <lineage>
        <taxon>Bacteria</taxon>
        <taxon>Pseudomonadati</taxon>
        <taxon>Pseudomonadota</taxon>
        <taxon>Alphaproteobacteria</taxon>
        <taxon>Hyphomicrobiales</taxon>
        <taxon>Rhizobiaceae</taxon>
        <taxon>Rhizobium/Agrobacterium group</taxon>
        <taxon>Agrobacterium</taxon>
        <taxon>Agrobacterium tumefaciens complex</taxon>
    </lineage>
</organism>
<gene>
    <name type="primary">dps</name>
    <name type="ordered locus">Atu2477</name>
    <name type="ORF">AGR_C_4495</name>
</gene>
<comment type="function">
    <text evidence="2">Protects DNA from oxidative damage by sequestering intracellular Fe(2+) ion and storing it in the form of Fe(3+) oxyhydroxide mineral, which can be released after reduction. It efficiently inhibits hydroxyl radical production by the Fenton reaction. Does not bind DNA.</text>
</comment>
<comment type="catalytic activity">
    <reaction>
        <text>2 Fe(2+) + H2O2 + 2 H(+) = 2 Fe(3+) + 2 H2O</text>
        <dbReference type="Rhea" id="RHEA:48712"/>
        <dbReference type="ChEBI" id="CHEBI:15377"/>
        <dbReference type="ChEBI" id="CHEBI:15378"/>
        <dbReference type="ChEBI" id="CHEBI:16240"/>
        <dbReference type="ChEBI" id="CHEBI:29033"/>
        <dbReference type="ChEBI" id="CHEBI:29034"/>
    </reaction>
</comment>
<comment type="subunit">
    <text evidence="2">Homododecamer. The 12 subunits form a hollow sphere into which the mineral iron core of up to 500 Fe(3+) can be deposited.</text>
</comment>
<comment type="subcellular location">
    <subcellularLocation>
        <location evidence="1">Cytoplasm</location>
    </subcellularLocation>
</comment>
<comment type="domain">
    <text>12 di-nuclear ferroxidase centers are located at the interfaces between subunits related by 2-fold symmetry axes.</text>
</comment>
<comment type="similarity">
    <text evidence="3">Belongs to the Dps family.</text>
</comment>
<sequence length="162" mass="17823">MKTHKTKNDLPSNAKSTVIGILNESLASVIDLALVTKQAHWNLKGPQFIAVHELLDTFRTQLDNHGDTIAERVVQLGGTALGSLQAVSSTTKLKAYPTDIYKIHDHLDALIERYGEVANMIRKAIDDSDEAGDPTTADIFTAASRDLDKSLWFLEAHVQEKS</sequence>
<reference key="1">
    <citation type="journal article" date="2001" name="Science">
        <title>The genome of the natural genetic engineer Agrobacterium tumefaciens C58.</title>
        <authorList>
            <person name="Wood D.W."/>
            <person name="Setubal J.C."/>
            <person name="Kaul R."/>
            <person name="Monks D.E."/>
            <person name="Kitajima J.P."/>
            <person name="Okura V.K."/>
            <person name="Zhou Y."/>
            <person name="Chen L."/>
            <person name="Wood G.E."/>
            <person name="Almeida N.F. Jr."/>
            <person name="Woo L."/>
            <person name="Chen Y."/>
            <person name="Paulsen I.T."/>
            <person name="Eisen J.A."/>
            <person name="Karp P.D."/>
            <person name="Bovee D. Sr."/>
            <person name="Chapman P."/>
            <person name="Clendenning J."/>
            <person name="Deatherage G."/>
            <person name="Gillet W."/>
            <person name="Grant C."/>
            <person name="Kutyavin T."/>
            <person name="Levy R."/>
            <person name="Li M.-J."/>
            <person name="McClelland E."/>
            <person name="Palmieri A."/>
            <person name="Raymond C."/>
            <person name="Rouse G."/>
            <person name="Saenphimmachak C."/>
            <person name="Wu Z."/>
            <person name="Romero P."/>
            <person name="Gordon D."/>
            <person name="Zhang S."/>
            <person name="Yoo H."/>
            <person name="Tao Y."/>
            <person name="Biddle P."/>
            <person name="Jung M."/>
            <person name="Krespan W."/>
            <person name="Perry M."/>
            <person name="Gordon-Kamm B."/>
            <person name="Liao L."/>
            <person name="Kim S."/>
            <person name="Hendrick C."/>
            <person name="Zhao Z.-Y."/>
            <person name="Dolan M."/>
            <person name="Chumley F."/>
            <person name="Tingey S.V."/>
            <person name="Tomb J.-F."/>
            <person name="Gordon M.P."/>
            <person name="Olson M.V."/>
            <person name="Nester E.W."/>
        </authorList>
    </citation>
    <scope>NUCLEOTIDE SEQUENCE [LARGE SCALE GENOMIC DNA]</scope>
    <source>
        <strain>C58 / ATCC 33970</strain>
    </source>
</reference>
<reference key="2">
    <citation type="journal article" date="2001" name="Science">
        <title>Genome sequence of the plant pathogen and biotechnology agent Agrobacterium tumefaciens C58.</title>
        <authorList>
            <person name="Goodner B."/>
            <person name="Hinkle G."/>
            <person name="Gattung S."/>
            <person name="Miller N."/>
            <person name="Blanchard M."/>
            <person name="Qurollo B."/>
            <person name="Goldman B.S."/>
            <person name="Cao Y."/>
            <person name="Askenazi M."/>
            <person name="Halling C."/>
            <person name="Mullin L."/>
            <person name="Houmiel K."/>
            <person name="Gordon J."/>
            <person name="Vaudin M."/>
            <person name="Iartchouk O."/>
            <person name="Epp A."/>
            <person name="Liu F."/>
            <person name="Wollam C."/>
            <person name="Allinger M."/>
            <person name="Doughty D."/>
            <person name="Scott C."/>
            <person name="Lappas C."/>
            <person name="Markelz B."/>
            <person name="Flanagan C."/>
            <person name="Crowell C."/>
            <person name="Gurson J."/>
            <person name="Lomo C."/>
            <person name="Sear C."/>
            <person name="Strub G."/>
            <person name="Cielo C."/>
            <person name="Slater S."/>
        </authorList>
    </citation>
    <scope>NUCLEOTIDE SEQUENCE [LARGE SCALE GENOMIC DNA]</scope>
    <source>
        <strain>C58 / ATCC 33970</strain>
    </source>
</reference>
<reference key="3">
    <citation type="journal article" date="2003" name="J. Biol. Chem.">
        <title>The Dps protein of Agrobacterium tumefaciens does not bind to DNA but protects it toward oxidative cleavage: X-ray crystal structure, iron binding, and hydroxyl-radical scavenging properties.</title>
        <authorList>
            <person name="Ceci P."/>
            <person name="Ilari A."/>
            <person name="Falvo E."/>
            <person name="Chiancone E."/>
        </authorList>
    </citation>
    <scope>X-RAY CRYSTALLOGRAPHY (1.45 ANGSTROMS) IN COMPLEX WITH IRON</scope>
    <scope>FUNCTION IN DNA PROTECTION</scope>
    <scope>SUBUNIT</scope>
    <source>
        <strain>GV3101</strain>
    </source>
</reference>
<accession>Q8UCK6</accession>
<accession>Q7CWY8</accession>
<feature type="chain" id="PRO_0000253329" description="DNA protection during starvation protein">
    <location>
        <begin position="1"/>
        <end position="162"/>
    </location>
</feature>
<feature type="binding site" evidence="2">
    <location>
        <position position="40"/>
    </location>
    <ligand>
        <name>Fe cation</name>
        <dbReference type="ChEBI" id="CHEBI:24875"/>
    </ligand>
</feature>
<feature type="binding site" evidence="1">
    <location>
        <position position="67"/>
    </location>
    <ligand>
        <name>Fe cation</name>
        <dbReference type="ChEBI" id="CHEBI:24875"/>
    </ligand>
</feature>
<feature type="binding site" evidence="2">
    <location>
        <position position="71"/>
    </location>
    <ligand>
        <name>Fe cation</name>
        <dbReference type="ChEBI" id="CHEBI:24875"/>
    </ligand>
</feature>
<feature type="helix" evidence="4">
    <location>
        <begin position="12"/>
        <end position="42"/>
    </location>
</feature>
<feature type="helix" evidence="4">
    <location>
        <begin position="48"/>
        <end position="75"/>
    </location>
</feature>
<feature type="helix" evidence="4">
    <location>
        <begin position="84"/>
        <end position="90"/>
    </location>
</feature>
<feature type="helix" evidence="4">
    <location>
        <begin position="103"/>
        <end position="130"/>
    </location>
</feature>
<feature type="helix" evidence="4">
    <location>
        <begin position="134"/>
        <end position="156"/>
    </location>
</feature>